<reference key="1">
    <citation type="journal article" date="2009" name="PLoS ONE">
        <title>Salmonella paratyphi C: genetic divergence from Salmonella choleraesuis and pathogenic convergence with Salmonella typhi.</title>
        <authorList>
            <person name="Liu W.-Q."/>
            <person name="Feng Y."/>
            <person name="Wang Y."/>
            <person name="Zou Q.-H."/>
            <person name="Chen F."/>
            <person name="Guo J.-T."/>
            <person name="Peng Y.-H."/>
            <person name="Jin Y."/>
            <person name="Li Y.-G."/>
            <person name="Hu S.-N."/>
            <person name="Johnston R.N."/>
            <person name="Liu G.-R."/>
            <person name="Liu S.-L."/>
        </authorList>
    </citation>
    <scope>NUCLEOTIDE SEQUENCE [LARGE SCALE GENOMIC DNA]</scope>
    <source>
        <strain>RKS4594</strain>
    </source>
</reference>
<dbReference type="EMBL" id="CP000857">
    <property type="protein sequence ID" value="ACN44424.1"/>
    <property type="molecule type" value="Genomic_DNA"/>
</dbReference>
<dbReference type="RefSeq" id="WP_000622423.1">
    <property type="nucleotide sequence ID" value="NC_012125.1"/>
</dbReference>
<dbReference type="SMR" id="C0Q6J5"/>
<dbReference type="KEGG" id="sei:SPC_0235"/>
<dbReference type="HOGENOM" id="CLU_073981_2_1_6"/>
<dbReference type="Proteomes" id="UP000001599">
    <property type="component" value="Chromosome"/>
</dbReference>
<dbReference type="GO" id="GO:0005829">
    <property type="term" value="C:cytosol"/>
    <property type="evidence" value="ECO:0007669"/>
    <property type="project" value="GOC"/>
</dbReference>
<dbReference type="GO" id="GO:0043023">
    <property type="term" value="F:ribosomal large subunit binding"/>
    <property type="evidence" value="ECO:0007669"/>
    <property type="project" value="TreeGrafter"/>
</dbReference>
<dbReference type="GO" id="GO:0002184">
    <property type="term" value="P:cytoplasmic translational termination"/>
    <property type="evidence" value="ECO:0007669"/>
    <property type="project" value="TreeGrafter"/>
</dbReference>
<dbReference type="CDD" id="cd00520">
    <property type="entry name" value="RRF"/>
    <property type="match status" value="1"/>
</dbReference>
<dbReference type="FunFam" id="1.10.132.20:FF:000001">
    <property type="entry name" value="Ribosome-recycling factor"/>
    <property type="match status" value="1"/>
</dbReference>
<dbReference type="FunFam" id="3.30.1360.40:FF:000001">
    <property type="entry name" value="Ribosome-recycling factor"/>
    <property type="match status" value="1"/>
</dbReference>
<dbReference type="Gene3D" id="3.30.1360.40">
    <property type="match status" value="1"/>
</dbReference>
<dbReference type="Gene3D" id="1.10.132.20">
    <property type="entry name" value="Ribosome-recycling factor"/>
    <property type="match status" value="1"/>
</dbReference>
<dbReference type="HAMAP" id="MF_00040">
    <property type="entry name" value="RRF"/>
    <property type="match status" value="1"/>
</dbReference>
<dbReference type="InterPro" id="IPR002661">
    <property type="entry name" value="Ribosome_recyc_fac"/>
</dbReference>
<dbReference type="InterPro" id="IPR023584">
    <property type="entry name" value="Ribosome_recyc_fac_dom"/>
</dbReference>
<dbReference type="InterPro" id="IPR036191">
    <property type="entry name" value="RRF_sf"/>
</dbReference>
<dbReference type="NCBIfam" id="TIGR00496">
    <property type="entry name" value="frr"/>
    <property type="match status" value="1"/>
</dbReference>
<dbReference type="PANTHER" id="PTHR20982:SF3">
    <property type="entry name" value="MITOCHONDRIAL RIBOSOME RECYCLING FACTOR PSEUDO 1"/>
    <property type="match status" value="1"/>
</dbReference>
<dbReference type="PANTHER" id="PTHR20982">
    <property type="entry name" value="RIBOSOME RECYCLING FACTOR"/>
    <property type="match status" value="1"/>
</dbReference>
<dbReference type="Pfam" id="PF01765">
    <property type="entry name" value="RRF"/>
    <property type="match status" value="1"/>
</dbReference>
<dbReference type="SUPFAM" id="SSF55194">
    <property type="entry name" value="Ribosome recycling factor, RRF"/>
    <property type="match status" value="1"/>
</dbReference>
<organism>
    <name type="scientific">Salmonella paratyphi C (strain RKS4594)</name>
    <dbReference type="NCBI Taxonomy" id="476213"/>
    <lineage>
        <taxon>Bacteria</taxon>
        <taxon>Pseudomonadati</taxon>
        <taxon>Pseudomonadota</taxon>
        <taxon>Gammaproteobacteria</taxon>
        <taxon>Enterobacterales</taxon>
        <taxon>Enterobacteriaceae</taxon>
        <taxon>Salmonella</taxon>
    </lineage>
</organism>
<gene>
    <name evidence="1" type="primary">frr</name>
    <name type="ordered locus">SPC_0235</name>
</gene>
<evidence type="ECO:0000255" key="1">
    <source>
        <dbReference type="HAMAP-Rule" id="MF_00040"/>
    </source>
</evidence>
<comment type="function">
    <text evidence="1">Responsible for the release of ribosomes from messenger RNA at the termination of protein biosynthesis. May increase the efficiency of translation by recycling ribosomes from one round of translation to another.</text>
</comment>
<comment type="subcellular location">
    <subcellularLocation>
        <location evidence="1">Cytoplasm</location>
    </subcellularLocation>
</comment>
<comment type="similarity">
    <text evidence="1">Belongs to the RRF family.</text>
</comment>
<feature type="chain" id="PRO_1000194949" description="Ribosome-recycling factor">
    <location>
        <begin position="1"/>
        <end position="185"/>
    </location>
</feature>
<accession>C0Q6J5</accession>
<protein>
    <recommendedName>
        <fullName evidence="1">Ribosome-recycling factor</fullName>
        <shortName evidence="1">RRF</shortName>
    </recommendedName>
    <alternativeName>
        <fullName evidence="1">Ribosome-releasing factor</fullName>
    </alternativeName>
</protein>
<sequence>MISDIRKDAEVRMEKCVEAFKTQISKVRTGRASPSLLDGIVVEYYGTPTPLRQLASVTVEDSRTLKINVFDRSMGPAVEKAIMASDLGLNPSSAGTDIRVPLPPLTEERRKDLTKIVRGEAEQARVAVRNVRRDANDKVKALLKDKAISEDDDRRSQEEVQKMTDAAIKKVDAALADKEAELMQF</sequence>
<proteinExistence type="inferred from homology"/>
<keyword id="KW-0963">Cytoplasm</keyword>
<keyword id="KW-0648">Protein biosynthesis</keyword>
<name>RRF_SALPC</name>